<reference key="1">
    <citation type="submission" date="2007-09" db="EMBL/GenBank/DDBJ databases">
        <title>Complete genome sequence of Rickettsia akari.</title>
        <authorList>
            <person name="Madan A."/>
            <person name="Fahey J."/>
            <person name="Helton E."/>
            <person name="Ketteman M."/>
            <person name="Madan A."/>
            <person name="Rodrigues S."/>
            <person name="Sanchez A."/>
            <person name="Whiting M."/>
            <person name="Dasch G."/>
            <person name="Eremeeva M."/>
        </authorList>
    </citation>
    <scope>NUCLEOTIDE SEQUENCE [LARGE SCALE GENOMIC DNA]</scope>
    <source>
        <strain>Hartford</strain>
    </source>
</reference>
<organism>
    <name type="scientific">Rickettsia akari (strain Hartford)</name>
    <dbReference type="NCBI Taxonomy" id="293614"/>
    <lineage>
        <taxon>Bacteria</taxon>
        <taxon>Pseudomonadati</taxon>
        <taxon>Pseudomonadota</taxon>
        <taxon>Alphaproteobacteria</taxon>
        <taxon>Rickettsiales</taxon>
        <taxon>Rickettsiaceae</taxon>
        <taxon>Rickettsieae</taxon>
        <taxon>Rickettsia</taxon>
        <taxon>spotted fever group</taxon>
    </lineage>
</organism>
<sequence length="171" mass="19391">MEIILIKPVRKLGKIGDMLKVADGFGRNYLLPQKLAIRATEPNKELIVKQKHEFEAKDKQIREEVEKINALIKDQKLVFIRQASDDGKLFGSVTNKEIADKLSKNVSYNISHSNIILDKQIKSTGVYTVEIRLHAELNDIVTVIVARSESEAQDYLREKKTETSEDLAESA</sequence>
<name>RL9_RICAH</name>
<evidence type="ECO:0000255" key="1">
    <source>
        <dbReference type="HAMAP-Rule" id="MF_00503"/>
    </source>
</evidence>
<evidence type="ECO:0000305" key="2"/>
<dbReference type="EMBL" id="CP000847">
    <property type="protein sequence ID" value="ABV74403.1"/>
    <property type="molecule type" value="Genomic_DNA"/>
</dbReference>
<dbReference type="RefSeq" id="WP_012013273.1">
    <property type="nucleotide sequence ID" value="NC_009881.1"/>
</dbReference>
<dbReference type="SMR" id="A8GLX8"/>
<dbReference type="STRING" id="293614.A1C_00350"/>
<dbReference type="KEGG" id="rak:A1C_00350"/>
<dbReference type="eggNOG" id="COG0359">
    <property type="taxonomic scope" value="Bacteria"/>
</dbReference>
<dbReference type="HOGENOM" id="CLU_078938_3_0_5"/>
<dbReference type="Proteomes" id="UP000006830">
    <property type="component" value="Chromosome"/>
</dbReference>
<dbReference type="GO" id="GO:1990904">
    <property type="term" value="C:ribonucleoprotein complex"/>
    <property type="evidence" value="ECO:0007669"/>
    <property type="project" value="UniProtKB-KW"/>
</dbReference>
<dbReference type="GO" id="GO:0005840">
    <property type="term" value="C:ribosome"/>
    <property type="evidence" value="ECO:0007669"/>
    <property type="project" value="UniProtKB-KW"/>
</dbReference>
<dbReference type="GO" id="GO:0019843">
    <property type="term" value="F:rRNA binding"/>
    <property type="evidence" value="ECO:0007669"/>
    <property type="project" value="UniProtKB-UniRule"/>
</dbReference>
<dbReference type="GO" id="GO:0003735">
    <property type="term" value="F:structural constituent of ribosome"/>
    <property type="evidence" value="ECO:0007669"/>
    <property type="project" value="InterPro"/>
</dbReference>
<dbReference type="GO" id="GO:0006412">
    <property type="term" value="P:translation"/>
    <property type="evidence" value="ECO:0007669"/>
    <property type="project" value="UniProtKB-UniRule"/>
</dbReference>
<dbReference type="Gene3D" id="3.10.430.100">
    <property type="entry name" value="Ribosomal protein L9, C-terminal domain"/>
    <property type="match status" value="1"/>
</dbReference>
<dbReference type="Gene3D" id="3.40.5.10">
    <property type="entry name" value="Ribosomal protein L9, N-terminal domain"/>
    <property type="match status" value="1"/>
</dbReference>
<dbReference type="HAMAP" id="MF_00503">
    <property type="entry name" value="Ribosomal_bL9"/>
    <property type="match status" value="1"/>
</dbReference>
<dbReference type="InterPro" id="IPR000244">
    <property type="entry name" value="Ribosomal_bL9"/>
</dbReference>
<dbReference type="InterPro" id="IPR009027">
    <property type="entry name" value="Ribosomal_bL9/RNase_H1_N"/>
</dbReference>
<dbReference type="InterPro" id="IPR020594">
    <property type="entry name" value="Ribosomal_bL9_bac/chp"/>
</dbReference>
<dbReference type="InterPro" id="IPR020069">
    <property type="entry name" value="Ribosomal_bL9_C"/>
</dbReference>
<dbReference type="InterPro" id="IPR036791">
    <property type="entry name" value="Ribosomal_bL9_C_sf"/>
</dbReference>
<dbReference type="InterPro" id="IPR020070">
    <property type="entry name" value="Ribosomal_bL9_N"/>
</dbReference>
<dbReference type="InterPro" id="IPR036935">
    <property type="entry name" value="Ribosomal_bL9_N_sf"/>
</dbReference>
<dbReference type="NCBIfam" id="TIGR00158">
    <property type="entry name" value="L9"/>
    <property type="match status" value="1"/>
</dbReference>
<dbReference type="PANTHER" id="PTHR21368">
    <property type="entry name" value="50S RIBOSOMAL PROTEIN L9"/>
    <property type="match status" value="1"/>
</dbReference>
<dbReference type="Pfam" id="PF03948">
    <property type="entry name" value="Ribosomal_L9_C"/>
    <property type="match status" value="1"/>
</dbReference>
<dbReference type="Pfam" id="PF01281">
    <property type="entry name" value="Ribosomal_L9_N"/>
    <property type="match status" value="1"/>
</dbReference>
<dbReference type="SUPFAM" id="SSF55658">
    <property type="entry name" value="L9 N-domain-like"/>
    <property type="match status" value="1"/>
</dbReference>
<dbReference type="SUPFAM" id="SSF55653">
    <property type="entry name" value="Ribosomal protein L9 C-domain"/>
    <property type="match status" value="1"/>
</dbReference>
<dbReference type="PROSITE" id="PS00651">
    <property type="entry name" value="RIBOSOMAL_L9"/>
    <property type="match status" value="1"/>
</dbReference>
<gene>
    <name evidence="1" type="primary">rplI</name>
    <name type="ordered locus">A1C_00350</name>
</gene>
<comment type="function">
    <text evidence="1">Binds to the 23S rRNA.</text>
</comment>
<comment type="similarity">
    <text evidence="1">Belongs to the bacterial ribosomal protein bL9 family.</text>
</comment>
<protein>
    <recommendedName>
        <fullName evidence="1">Large ribosomal subunit protein bL9</fullName>
    </recommendedName>
    <alternativeName>
        <fullName evidence="2">50S ribosomal protein L9</fullName>
    </alternativeName>
</protein>
<keyword id="KW-0687">Ribonucleoprotein</keyword>
<keyword id="KW-0689">Ribosomal protein</keyword>
<keyword id="KW-0694">RNA-binding</keyword>
<keyword id="KW-0699">rRNA-binding</keyword>
<proteinExistence type="inferred from homology"/>
<accession>A8GLX8</accession>
<feature type="chain" id="PRO_1000014848" description="Large ribosomal subunit protein bL9">
    <location>
        <begin position="1"/>
        <end position="171"/>
    </location>
</feature>